<name>ELYS_HALKA</name>
<keyword id="KW-0278">Fertilization</keyword>
<keyword id="KW-0732">Signal</keyword>
<proteinExistence type="evidence at transcript level"/>
<accession>Q01382</accession>
<feature type="signal peptide">
    <location>
        <begin position="1"/>
        <end position="18"/>
    </location>
</feature>
<feature type="chain" id="PRO_0000021169" description="Egg-lysin">
    <location>
        <begin position="19"/>
        <end position="154"/>
    </location>
</feature>
<organism>
    <name type="scientific">Haliotis kamtschatkana</name>
    <name type="common">Pinto abalone</name>
    <name type="synonym">Northern abalone</name>
    <dbReference type="NCBI Taxonomy" id="6457"/>
    <lineage>
        <taxon>Eukaryota</taxon>
        <taxon>Metazoa</taxon>
        <taxon>Spiralia</taxon>
        <taxon>Lophotrochozoa</taxon>
        <taxon>Mollusca</taxon>
        <taxon>Gastropoda</taxon>
        <taxon>Vetigastropoda</taxon>
        <taxon>Lepetellida</taxon>
        <taxon>Haliotoidea</taxon>
        <taxon>Haliotidae</taxon>
        <taxon>Haliotis</taxon>
    </lineage>
</organism>
<sequence>MKLFVLCIFAMMATLAMSRSWTYVQPKFLNKAFEVALKEEIIVRWDRKLAKWLRVNGGPLSHVQKKALYFVNRRYMQTHWANYMLWINKKTDALGRTPVVGDYRRLGAEIGRRIDMVFFYKFLSGRNMIPKYMPYMEQINRMRAADIPVKYMGK</sequence>
<protein>
    <recommendedName>
        <fullName>Egg-lysin</fullName>
    </recommendedName>
    <alternativeName>
        <fullName>Sperm-lysin</fullName>
    </alternativeName>
</protein>
<reference key="1">
    <citation type="journal article" date="1992" name="Biol. Bull.">
        <title>The divergence of species-specific abalone sperm lysins is promoted by positive Darwinian selection.</title>
        <authorList>
            <person name="Lee Y.H."/>
            <person name="Vacquier V.D."/>
        </authorList>
    </citation>
    <scope>NUCLEOTIDE SEQUENCE [MRNA]</scope>
</reference>
<comment type="function">
    <text>Dissolves the egg vitelline layer nonenzymatically during fertilization. It creates a hole of about 3 mu-m in diameter through which the sperm pass.</text>
</comment>
<comment type="subunit">
    <text>Homodimer.</text>
</comment>
<comment type="tissue specificity">
    <text>Sperm.</text>
</comment>
<dbReference type="EMBL" id="M59970">
    <property type="protein sequence ID" value="AAA29200.1"/>
    <property type="molecule type" value="mRNA"/>
</dbReference>
<dbReference type="SMR" id="Q01382"/>
<dbReference type="GO" id="GO:0043160">
    <property type="term" value="C:acrosomal lumen"/>
    <property type="evidence" value="ECO:0000250"/>
    <property type="project" value="UniProtKB"/>
</dbReference>
<dbReference type="GO" id="GO:0007338">
    <property type="term" value="P:single fertilization"/>
    <property type="evidence" value="ECO:0000250"/>
    <property type="project" value="UniProtKB"/>
</dbReference>
<dbReference type="CDD" id="cd00243">
    <property type="entry name" value="Lysin-Sp18"/>
    <property type="match status" value="1"/>
</dbReference>
<dbReference type="FunFam" id="1.20.150.10:FF:000001">
    <property type="entry name" value="Egg-lysin"/>
    <property type="match status" value="1"/>
</dbReference>
<dbReference type="Gene3D" id="1.20.150.10">
    <property type="entry name" value="Fertilization protein"/>
    <property type="match status" value="1"/>
</dbReference>
<dbReference type="InterPro" id="IPR001379">
    <property type="entry name" value="Egg_lysin"/>
</dbReference>
<dbReference type="InterPro" id="IPR035916">
    <property type="entry name" value="Egg_lysin_sf"/>
</dbReference>
<dbReference type="Pfam" id="PF01303">
    <property type="entry name" value="Egg_lysin"/>
    <property type="match status" value="1"/>
</dbReference>
<dbReference type="PRINTS" id="PR01882">
    <property type="entry name" value="LYSIN"/>
</dbReference>
<dbReference type="SUPFAM" id="SSF47082">
    <property type="entry name" value="Fertilization protein"/>
    <property type="match status" value="1"/>
</dbReference>